<name>MER_PSEAI</name>
<accession>P04139</accession>
<evidence type="ECO:0000305" key="1"/>
<protein>
    <recommendedName>
        <fullName evidence="1">Putative mercuric resistance protein</fullName>
    </recommendedName>
</protein>
<keyword id="KW-0475">Mercuric resistance</keyword>
<keyword id="KW-0614">Plasmid</keyword>
<keyword id="KW-0814">Transposable element</keyword>
<feature type="chain" id="PRO_0000096423" description="Putative mercuric resistance protein">
    <location>
        <begin position="1"/>
        <end position="60"/>
    </location>
</feature>
<dbReference type="EMBL" id="K02503">
    <property type="protein sequence ID" value="AAA27432.1"/>
    <property type="molecule type" value="Genomic_DNA"/>
</dbReference>
<dbReference type="PIR" id="A04459">
    <property type="entry name" value="QQPSHC"/>
</dbReference>
<dbReference type="GO" id="GO:0046689">
    <property type="term" value="P:response to mercury ion"/>
    <property type="evidence" value="ECO:0007669"/>
    <property type="project" value="UniProtKB-KW"/>
</dbReference>
<sequence>MRARSAIFSRTSLSLCSARLLASSQWVPSSSRSSSAISSRLKPSRWADFTKRTRVTSASP</sequence>
<comment type="miscellaneous">
    <text evidence="1">Part of the mercury resistance operon (mer).</text>
</comment>
<geneLocation type="plasmid">
    <name>pVS1</name>
</geneLocation>
<organism>
    <name type="scientific">Pseudomonas aeruginosa</name>
    <dbReference type="NCBI Taxonomy" id="287"/>
    <lineage>
        <taxon>Bacteria</taxon>
        <taxon>Pseudomonadati</taxon>
        <taxon>Pseudomonadota</taxon>
        <taxon>Gammaproteobacteria</taxon>
        <taxon>Pseudomonadales</taxon>
        <taxon>Pseudomonadaceae</taxon>
        <taxon>Pseudomonas</taxon>
    </lineage>
</organism>
<reference key="1">
    <citation type="journal article" date="1984" name="Proc. Natl. Acad. Sci. U.S.A.">
        <title>Mercuric ion-resistance operons of plasmid R100 and transposon Tn501: the beginning of the operon including the regulatory region and the first two structural genes.</title>
        <authorList>
            <person name="Misra T.K."/>
            <person name="Brown N.L."/>
            <person name="Fritzinger D.C."/>
            <person name="Pridmore R.D."/>
            <person name="Barnes W.M."/>
            <person name="Haberstroh L."/>
            <person name="Silver S."/>
        </authorList>
    </citation>
    <scope>NUCLEOTIDE SEQUENCE [GENOMIC DNA]</scope>
    <source>
        <transposon>Tn501</transposon>
    </source>
</reference>
<proteinExistence type="predicted"/>